<name>AROB_STAHJ</name>
<proteinExistence type="inferred from homology"/>
<reference key="1">
    <citation type="journal article" date="2005" name="J. Bacteriol.">
        <title>Whole-genome sequencing of Staphylococcus haemolyticus uncovers the extreme plasticity of its genome and the evolution of human-colonizing staphylococcal species.</title>
        <authorList>
            <person name="Takeuchi F."/>
            <person name="Watanabe S."/>
            <person name="Baba T."/>
            <person name="Yuzawa H."/>
            <person name="Ito T."/>
            <person name="Morimoto Y."/>
            <person name="Kuroda M."/>
            <person name="Cui L."/>
            <person name="Takahashi M."/>
            <person name="Ankai A."/>
            <person name="Baba S."/>
            <person name="Fukui S."/>
            <person name="Lee J.C."/>
            <person name="Hiramatsu K."/>
        </authorList>
    </citation>
    <scope>NUCLEOTIDE SEQUENCE [LARGE SCALE GENOMIC DNA]</scope>
    <source>
        <strain>JCSC1435</strain>
    </source>
</reference>
<comment type="function">
    <text evidence="1">Catalyzes the conversion of 3-deoxy-D-arabino-heptulosonate 7-phosphate (DAHP) to dehydroquinate (DHQ).</text>
</comment>
<comment type="catalytic activity">
    <reaction evidence="1">
        <text>7-phospho-2-dehydro-3-deoxy-D-arabino-heptonate = 3-dehydroquinate + phosphate</text>
        <dbReference type="Rhea" id="RHEA:21968"/>
        <dbReference type="ChEBI" id="CHEBI:32364"/>
        <dbReference type="ChEBI" id="CHEBI:43474"/>
        <dbReference type="ChEBI" id="CHEBI:58394"/>
        <dbReference type="EC" id="4.2.3.4"/>
    </reaction>
</comment>
<comment type="cofactor">
    <cofactor evidence="1">
        <name>Co(2+)</name>
        <dbReference type="ChEBI" id="CHEBI:48828"/>
    </cofactor>
    <cofactor evidence="1">
        <name>Zn(2+)</name>
        <dbReference type="ChEBI" id="CHEBI:29105"/>
    </cofactor>
    <text evidence="1">Binds 1 divalent metal cation per subunit. Can use either Co(2+) or Zn(2+).</text>
</comment>
<comment type="cofactor">
    <cofactor evidence="1">
        <name>NAD(+)</name>
        <dbReference type="ChEBI" id="CHEBI:57540"/>
    </cofactor>
</comment>
<comment type="pathway">
    <text evidence="1">Metabolic intermediate biosynthesis; chorismate biosynthesis; chorismate from D-erythrose 4-phosphate and phosphoenolpyruvate: step 2/7.</text>
</comment>
<comment type="subcellular location">
    <subcellularLocation>
        <location evidence="1">Cytoplasm</location>
    </subcellularLocation>
</comment>
<comment type="similarity">
    <text evidence="1">Belongs to the sugar phosphate cyclases superfamily. Dehydroquinate synthase family.</text>
</comment>
<protein>
    <recommendedName>
        <fullName evidence="1">3-dehydroquinate synthase</fullName>
        <shortName evidence="1">DHQS</shortName>
        <ecNumber evidence="1">4.2.3.4</ecNumber>
    </recommendedName>
</protein>
<feature type="chain" id="PRO_0000231130" description="3-dehydroquinate synthase">
    <location>
        <begin position="1"/>
        <end position="354"/>
    </location>
</feature>
<feature type="binding site" evidence="1">
    <location>
        <begin position="100"/>
        <end position="104"/>
    </location>
    <ligand>
        <name>NAD(+)</name>
        <dbReference type="ChEBI" id="CHEBI:57540"/>
    </ligand>
</feature>
<feature type="binding site" evidence="1">
    <location>
        <begin position="124"/>
        <end position="125"/>
    </location>
    <ligand>
        <name>NAD(+)</name>
        <dbReference type="ChEBI" id="CHEBI:57540"/>
    </ligand>
</feature>
<feature type="binding site" evidence="1">
    <location>
        <position position="136"/>
    </location>
    <ligand>
        <name>NAD(+)</name>
        <dbReference type="ChEBI" id="CHEBI:57540"/>
    </ligand>
</feature>
<feature type="binding site" evidence="1">
    <location>
        <position position="145"/>
    </location>
    <ligand>
        <name>NAD(+)</name>
        <dbReference type="ChEBI" id="CHEBI:57540"/>
    </ligand>
</feature>
<feature type="binding site" evidence="1">
    <location>
        <begin position="163"/>
        <end position="166"/>
    </location>
    <ligand>
        <name>NAD(+)</name>
        <dbReference type="ChEBI" id="CHEBI:57540"/>
    </ligand>
</feature>
<feature type="binding site" evidence="1">
    <location>
        <position position="178"/>
    </location>
    <ligand>
        <name>Zn(2+)</name>
        <dbReference type="ChEBI" id="CHEBI:29105"/>
    </ligand>
</feature>
<feature type="binding site" evidence="1">
    <location>
        <position position="242"/>
    </location>
    <ligand>
        <name>Zn(2+)</name>
        <dbReference type="ChEBI" id="CHEBI:29105"/>
    </ligand>
</feature>
<feature type="binding site" evidence="1">
    <location>
        <position position="256"/>
    </location>
    <ligand>
        <name>Zn(2+)</name>
        <dbReference type="ChEBI" id="CHEBI:29105"/>
    </ligand>
</feature>
<organism>
    <name type="scientific">Staphylococcus haemolyticus (strain JCSC1435)</name>
    <dbReference type="NCBI Taxonomy" id="279808"/>
    <lineage>
        <taxon>Bacteria</taxon>
        <taxon>Bacillati</taxon>
        <taxon>Bacillota</taxon>
        <taxon>Bacilli</taxon>
        <taxon>Bacillales</taxon>
        <taxon>Staphylococcaceae</taxon>
        <taxon>Staphylococcus</taxon>
    </lineage>
</organism>
<evidence type="ECO:0000255" key="1">
    <source>
        <dbReference type="HAMAP-Rule" id="MF_00110"/>
    </source>
</evidence>
<gene>
    <name evidence="1" type="primary">aroB</name>
    <name type="ordered locus">SH1447</name>
</gene>
<dbReference type="EC" id="4.2.3.4" evidence="1"/>
<dbReference type="EMBL" id="AP006716">
    <property type="protein sequence ID" value="BAE04756.1"/>
    <property type="molecule type" value="Genomic_DNA"/>
</dbReference>
<dbReference type="RefSeq" id="WP_011275742.1">
    <property type="nucleotide sequence ID" value="NC_007168.1"/>
</dbReference>
<dbReference type="SMR" id="Q4L6G9"/>
<dbReference type="KEGG" id="sha:SH1447"/>
<dbReference type="eggNOG" id="COG0337">
    <property type="taxonomic scope" value="Bacteria"/>
</dbReference>
<dbReference type="HOGENOM" id="CLU_001201_0_1_9"/>
<dbReference type="OrthoDB" id="9806583at2"/>
<dbReference type="UniPathway" id="UPA00053">
    <property type="reaction ID" value="UER00085"/>
</dbReference>
<dbReference type="Proteomes" id="UP000000543">
    <property type="component" value="Chromosome"/>
</dbReference>
<dbReference type="GO" id="GO:0005737">
    <property type="term" value="C:cytoplasm"/>
    <property type="evidence" value="ECO:0007669"/>
    <property type="project" value="UniProtKB-SubCell"/>
</dbReference>
<dbReference type="GO" id="GO:0003856">
    <property type="term" value="F:3-dehydroquinate synthase activity"/>
    <property type="evidence" value="ECO:0007669"/>
    <property type="project" value="UniProtKB-UniRule"/>
</dbReference>
<dbReference type="GO" id="GO:0046872">
    <property type="term" value="F:metal ion binding"/>
    <property type="evidence" value="ECO:0007669"/>
    <property type="project" value="UniProtKB-KW"/>
</dbReference>
<dbReference type="GO" id="GO:0000166">
    <property type="term" value="F:nucleotide binding"/>
    <property type="evidence" value="ECO:0007669"/>
    <property type="project" value="UniProtKB-KW"/>
</dbReference>
<dbReference type="GO" id="GO:0008652">
    <property type="term" value="P:amino acid biosynthetic process"/>
    <property type="evidence" value="ECO:0007669"/>
    <property type="project" value="UniProtKB-KW"/>
</dbReference>
<dbReference type="GO" id="GO:0009073">
    <property type="term" value="P:aromatic amino acid family biosynthetic process"/>
    <property type="evidence" value="ECO:0007669"/>
    <property type="project" value="UniProtKB-KW"/>
</dbReference>
<dbReference type="GO" id="GO:0009423">
    <property type="term" value="P:chorismate biosynthetic process"/>
    <property type="evidence" value="ECO:0007669"/>
    <property type="project" value="UniProtKB-UniRule"/>
</dbReference>
<dbReference type="CDD" id="cd08195">
    <property type="entry name" value="DHQS"/>
    <property type="match status" value="1"/>
</dbReference>
<dbReference type="Gene3D" id="3.40.50.1970">
    <property type="match status" value="1"/>
</dbReference>
<dbReference type="Gene3D" id="1.20.1090.10">
    <property type="entry name" value="Dehydroquinate synthase-like - alpha domain"/>
    <property type="match status" value="1"/>
</dbReference>
<dbReference type="HAMAP" id="MF_00110">
    <property type="entry name" value="DHQ_synthase"/>
    <property type="match status" value="1"/>
</dbReference>
<dbReference type="InterPro" id="IPR050071">
    <property type="entry name" value="Dehydroquinate_synthase"/>
</dbReference>
<dbReference type="InterPro" id="IPR016037">
    <property type="entry name" value="DHQ_synth_AroB"/>
</dbReference>
<dbReference type="InterPro" id="IPR030963">
    <property type="entry name" value="DHQ_synth_fam"/>
</dbReference>
<dbReference type="InterPro" id="IPR030960">
    <property type="entry name" value="DHQS/DOIS_N"/>
</dbReference>
<dbReference type="InterPro" id="IPR056179">
    <property type="entry name" value="DHQS_C"/>
</dbReference>
<dbReference type="NCBIfam" id="TIGR01357">
    <property type="entry name" value="aroB"/>
    <property type="match status" value="1"/>
</dbReference>
<dbReference type="PANTHER" id="PTHR43622">
    <property type="entry name" value="3-DEHYDROQUINATE SYNTHASE"/>
    <property type="match status" value="1"/>
</dbReference>
<dbReference type="PANTHER" id="PTHR43622:SF7">
    <property type="entry name" value="3-DEHYDROQUINATE SYNTHASE, CHLOROPLASTIC"/>
    <property type="match status" value="1"/>
</dbReference>
<dbReference type="Pfam" id="PF01761">
    <property type="entry name" value="DHQ_synthase"/>
    <property type="match status" value="1"/>
</dbReference>
<dbReference type="Pfam" id="PF24621">
    <property type="entry name" value="DHQS_C"/>
    <property type="match status" value="1"/>
</dbReference>
<dbReference type="PIRSF" id="PIRSF001455">
    <property type="entry name" value="DHQ_synth"/>
    <property type="match status" value="1"/>
</dbReference>
<dbReference type="SUPFAM" id="SSF56796">
    <property type="entry name" value="Dehydroquinate synthase-like"/>
    <property type="match status" value="1"/>
</dbReference>
<accession>Q4L6G9</accession>
<sequence length="354" mass="40619">MQLQTTYPNNNYPIIVEHNAFEELSEYIQDYDKVFLIIDEYVDFNFKTKFMPFLESTHIYKIIVPAGEKMKSFEHYQQTLEHLLEYNLTRNTCLVAIGGGATGDFTGFLASSLLRGVDFIQVPTTILAHDSSVGGKVGINSIHGKNLIGAFYRPKAVIYDLNFLATLPYDEILSGYAEVYKHALLTGQVAVDDIEKHFSTKEKLQSLNDIDQFIFKGIKAKLNVIIKDEKEHNMRKYLNLGHTFGHAVEYKTKIPHGHAVMIGIIYQFIVANTLLDTQFDISYYANYLKKLHYPVQIVQQLNFDDMYHYMLTDKKNNGEGIQMVLLEELGKPRVCHVEKTILIKAFNDLQLVLK</sequence>
<keyword id="KW-0028">Amino-acid biosynthesis</keyword>
<keyword id="KW-0057">Aromatic amino acid biosynthesis</keyword>
<keyword id="KW-0170">Cobalt</keyword>
<keyword id="KW-0963">Cytoplasm</keyword>
<keyword id="KW-0456">Lyase</keyword>
<keyword id="KW-0479">Metal-binding</keyword>
<keyword id="KW-0520">NAD</keyword>
<keyword id="KW-0547">Nucleotide-binding</keyword>
<keyword id="KW-0862">Zinc</keyword>